<reference key="1">
    <citation type="journal article" date="2013" name="Nature">
        <title>The zebrafish reference genome sequence and its relationship to the human genome.</title>
        <authorList>
            <person name="Howe K."/>
            <person name="Clark M.D."/>
            <person name="Torroja C.F."/>
            <person name="Torrance J."/>
            <person name="Berthelot C."/>
            <person name="Muffato M."/>
            <person name="Collins J.E."/>
            <person name="Humphray S."/>
            <person name="McLaren K."/>
            <person name="Matthews L."/>
            <person name="McLaren S."/>
            <person name="Sealy I."/>
            <person name="Caccamo M."/>
            <person name="Churcher C."/>
            <person name="Scott C."/>
            <person name="Barrett J.C."/>
            <person name="Koch R."/>
            <person name="Rauch G.J."/>
            <person name="White S."/>
            <person name="Chow W."/>
            <person name="Kilian B."/>
            <person name="Quintais L.T."/>
            <person name="Guerra-Assuncao J.A."/>
            <person name="Zhou Y."/>
            <person name="Gu Y."/>
            <person name="Yen J."/>
            <person name="Vogel J.H."/>
            <person name="Eyre T."/>
            <person name="Redmond S."/>
            <person name="Banerjee R."/>
            <person name="Chi J."/>
            <person name="Fu B."/>
            <person name="Langley E."/>
            <person name="Maguire S.F."/>
            <person name="Laird G.K."/>
            <person name="Lloyd D."/>
            <person name="Kenyon E."/>
            <person name="Donaldson S."/>
            <person name="Sehra H."/>
            <person name="Almeida-King J."/>
            <person name="Loveland J."/>
            <person name="Trevanion S."/>
            <person name="Jones M."/>
            <person name="Quail M."/>
            <person name="Willey D."/>
            <person name="Hunt A."/>
            <person name="Burton J."/>
            <person name="Sims S."/>
            <person name="McLay K."/>
            <person name="Plumb B."/>
            <person name="Davis J."/>
            <person name="Clee C."/>
            <person name="Oliver K."/>
            <person name="Clark R."/>
            <person name="Riddle C."/>
            <person name="Elliot D."/>
            <person name="Threadgold G."/>
            <person name="Harden G."/>
            <person name="Ware D."/>
            <person name="Begum S."/>
            <person name="Mortimore B."/>
            <person name="Kerry G."/>
            <person name="Heath P."/>
            <person name="Phillimore B."/>
            <person name="Tracey A."/>
            <person name="Corby N."/>
            <person name="Dunn M."/>
            <person name="Johnson C."/>
            <person name="Wood J."/>
            <person name="Clark S."/>
            <person name="Pelan S."/>
            <person name="Griffiths G."/>
            <person name="Smith M."/>
            <person name="Glithero R."/>
            <person name="Howden P."/>
            <person name="Barker N."/>
            <person name="Lloyd C."/>
            <person name="Stevens C."/>
            <person name="Harley J."/>
            <person name="Holt K."/>
            <person name="Panagiotidis G."/>
            <person name="Lovell J."/>
            <person name="Beasley H."/>
            <person name="Henderson C."/>
            <person name="Gordon D."/>
            <person name="Auger K."/>
            <person name="Wright D."/>
            <person name="Collins J."/>
            <person name="Raisen C."/>
            <person name="Dyer L."/>
            <person name="Leung K."/>
            <person name="Robertson L."/>
            <person name="Ambridge K."/>
            <person name="Leongamornlert D."/>
            <person name="McGuire S."/>
            <person name="Gilderthorp R."/>
            <person name="Griffiths C."/>
            <person name="Manthravadi D."/>
            <person name="Nichol S."/>
            <person name="Barker G."/>
            <person name="Whitehead S."/>
            <person name="Kay M."/>
            <person name="Brown J."/>
            <person name="Murnane C."/>
            <person name="Gray E."/>
            <person name="Humphries M."/>
            <person name="Sycamore N."/>
            <person name="Barker D."/>
            <person name="Saunders D."/>
            <person name="Wallis J."/>
            <person name="Babbage A."/>
            <person name="Hammond S."/>
            <person name="Mashreghi-Mohammadi M."/>
            <person name="Barr L."/>
            <person name="Martin S."/>
            <person name="Wray P."/>
            <person name="Ellington A."/>
            <person name="Matthews N."/>
            <person name="Ellwood M."/>
            <person name="Woodmansey R."/>
            <person name="Clark G."/>
            <person name="Cooper J."/>
            <person name="Tromans A."/>
            <person name="Grafham D."/>
            <person name="Skuce C."/>
            <person name="Pandian R."/>
            <person name="Andrews R."/>
            <person name="Harrison E."/>
            <person name="Kimberley A."/>
            <person name="Garnett J."/>
            <person name="Fosker N."/>
            <person name="Hall R."/>
            <person name="Garner P."/>
            <person name="Kelly D."/>
            <person name="Bird C."/>
            <person name="Palmer S."/>
            <person name="Gehring I."/>
            <person name="Berger A."/>
            <person name="Dooley C.M."/>
            <person name="Ersan-Urun Z."/>
            <person name="Eser C."/>
            <person name="Geiger H."/>
            <person name="Geisler M."/>
            <person name="Karotki L."/>
            <person name="Kirn A."/>
            <person name="Konantz J."/>
            <person name="Konantz M."/>
            <person name="Oberlander M."/>
            <person name="Rudolph-Geiger S."/>
            <person name="Teucke M."/>
            <person name="Lanz C."/>
            <person name="Raddatz G."/>
            <person name="Osoegawa K."/>
            <person name="Zhu B."/>
            <person name="Rapp A."/>
            <person name="Widaa S."/>
            <person name="Langford C."/>
            <person name="Yang F."/>
            <person name="Schuster S.C."/>
            <person name="Carter N.P."/>
            <person name="Harrow J."/>
            <person name="Ning Z."/>
            <person name="Herrero J."/>
            <person name="Searle S.M."/>
            <person name="Enright A."/>
            <person name="Geisler R."/>
            <person name="Plasterk R.H."/>
            <person name="Lee C."/>
            <person name="Westerfield M."/>
            <person name="de Jong P.J."/>
            <person name="Zon L.I."/>
            <person name="Postlethwait J.H."/>
            <person name="Nusslein-Volhard C."/>
            <person name="Hubbard T.J."/>
            <person name="Roest Crollius H."/>
            <person name="Rogers J."/>
            <person name="Stemple D.L."/>
        </authorList>
    </citation>
    <scope>NUCLEOTIDE SEQUENCE [LARGE SCALE GENOMIC DNA]</scope>
    <source>
        <strain>Tuebingen</strain>
    </source>
</reference>
<sequence length="276" mass="32063">MTLAHIFQTIWDFGTKDSVLQPIWDYVRLNHSETLRSPLFPVVLTVSSYFVLVLPYLSCDILGRKWPAIYRYKIQPDKLPTTAMLLHCSGVTLYNHILLVIPAAVAQWMWRPPIPLPEQAPTLLELVGGVTGNLLLFDLQYFIWHFLHHKIRWLYVTFHAIHHNYSAPFALATQCLGGWELVTVGFWTTLNPVLLRCHLLTTWMFMVVHVYVSVEDHCGYDFPWSTSRLIPFGVYGGPSKHDVHHQKPNTNFAPHFSHWDKMFGTHADFRFSKPRE</sequence>
<dbReference type="EC" id="1.14.99.-"/>
<dbReference type="EMBL" id="BX470164">
    <property type="protein sequence ID" value="CAK10818.1"/>
    <property type="molecule type" value="Genomic_DNA"/>
</dbReference>
<dbReference type="RefSeq" id="NP_001076393.1">
    <property type="nucleotide sequence ID" value="NM_001082924.1"/>
</dbReference>
<dbReference type="FunCoup" id="Q1LX59">
    <property type="interactions" value="4"/>
</dbReference>
<dbReference type="STRING" id="7955.ENSDARP00000089118"/>
<dbReference type="GlyCosmos" id="Q1LX59">
    <property type="glycosylation" value="2 sites, No reported glycans"/>
</dbReference>
<dbReference type="PaxDb" id="7955-ENSDARP00000089118"/>
<dbReference type="Ensembl" id="ENSDART00000098347">
    <property type="protein sequence ID" value="ENSDARP00000089118"/>
    <property type="gene ID" value="ENSDARG00000068138"/>
</dbReference>
<dbReference type="GeneID" id="798384"/>
<dbReference type="KEGG" id="dre:798384"/>
<dbReference type="AGR" id="ZFIN:ZDB-GENE-050419-90"/>
<dbReference type="CTD" id="798384"/>
<dbReference type="ZFIN" id="ZDB-GENE-050419-90">
    <property type="gene designation" value="ch25hl1.2"/>
</dbReference>
<dbReference type="eggNOG" id="KOG0873">
    <property type="taxonomic scope" value="Eukaryota"/>
</dbReference>
<dbReference type="HOGENOM" id="CLU_047036_5_1_1"/>
<dbReference type="InParanoid" id="Q1LX59"/>
<dbReference type="OMA" id="CDIMGDR"/>
<dbReference type="OrthoDB" id="1658724at2759"/>
<dbReference type="PhylomeDB" id="Q1LX59"/>
<dbReference type="TreeFam" id="TF314256"/>
<dbReference type="PRO" id="PR:Q1LX59"/>
<dbReference type="Proteomes" id="UP000000437">
    <property type="component" value="Alternate scaffold 18"/>
</dbReference>
<dbReference type="Proteomes" id="UP000000437">
    <property type="component" value="Chromosome 18"/>
</dbReference>
<dbReference type="Bgee" id="ENSDARG00000068138">
    <property type="expression patterns" value="Expressed in brain and 6 other cell types or tissues"/>
</dbReference>
<dbReference type="ExpressionAtlas" id="Q1LX59">
    <property type="expression patterns" value="baseline"/>
</dbReference>
<dbReference type="GO" id="GO:0005789">
    <property type="term" value="C:endoplasmic reticulum membrane"/>
    <property type="evidence" value="ECO:0000318"/>
    <property type="project" value="GO_Central"/>
</dbReference>
<dbReference type="GO" id="GO:0000254">
    <property type="term" value="F:C-4 methylsterol oxidase activity"/>
    <property type="evidence" value="ECO:0000318"/>
    <property type="project" value="GO_Central"/>
</dbReference>
<dbReference type="GO" id="GO:0005506">
    <property type="term" value="F:iron ion binding"/>
    <property type="evidence" value="ECO:0007669"/>
    <property type="project" value="InterPro"/>
</dbReference>
<dbReference type="GO" id="GO:0008395">
    <property type="term" value="F:steroid hydroxylase activity"/>
    <property type="evidence" value="ECO:0000318"/>
    <property type="project" value="GO_Central"/>
</dbReference>
<dbReference type="GO" id="GO:0008203">
    <property type="term" value="P:cholesterol metabolic process"/>
    <property type="evidence" value="ECO:0000318"/>
    <property type="project" value="GO_Central"/>
</dbReference>
<dbReference type="GO" id="GO:0016126">
    <property type="term" value="P:sterol biosynthetic process"/>
    <property type="evidence" value="ECO:0000318"/>
    <property type="project" value="GO_Central"/>
</dbReference>
<dbReference type="InterPro" id="IPR006694">
    <property type="entry name" value="Fatty_acid_hydroxylase"/>
</dbReference>
<dbReference type="InterPro" id="IPR050307">
    <property type="entry name" value="Sterol_Desaturase_Related"/>
</dbReference>
<dbReference type="PANTHER" id="PTHR11863">
    <property type="entry name" value="STEROL DESATURASE"/>
    <property type="match status" value="1"/>
</dbReference>
<dbReference type="Pfam" id="PF04116">
    <property type="entry name" value="FA_hydroxylase"/>
    <property type="match status" value="1"/>
</dbReference>
<keyword id="KW-0256">Endoplasmic reticulum</keyword>
<keyword id="KW-0325">Glycoprotein</keyword>
<keyword id="KW-0408">Iron</keyword>
<keyword id="KW-0444">Lipid biosynthesis</keyword>
<keyword id="KW-0443">Lipid metabolism</keyword>
<keyword id="KW-0472">Membrane</keyword>
<keyword id="KW-0479">Metal-binding</keyword>
<keyword id="KW-0503">Monooxygenase</keyword>
<keyword id="KW-0560">Oxidoreductase</keyword>
<keyword id="KW-1185">Reference proteome</keyword>
<keyword id="KW-0752">Steroid biosynthesis</keyword>
<keyword id="KW-0753">Steroid metabolism</keyword>
<keyword id="KW-0756">Sterol biosynthesis</keyword>
<keyword id="KW-1207">Sterol metabolism</keyword>
<keyword id="KW-0812">Transmembrane</keyword>
<keyword id="KW-1133">Transmembrane helix</keyword>
<name>C2512_DANRE</name>
<comment type="function">
    <text evidence="1">May catalyze the formation of 25-hydroxycholesterol from cholesterol.</text>
</comment>
<comment type="cofactor">
    <cofactor evidence="1">
        <name>Fe cation</name>
        <dbReference type="ChEBI" id="CHEBI:24875"/>
    </cofactor>
</comment>
<comment type="subcellular location">
    <subcellularLocation>
        <location evidence="1">Endoplasmic reticulum membrane</location>
        <topology evidence="1">Multi-pass membrane protein</topology>
    </subcellularLocation>
</comment>
<comment type="similarity">
    <text evidence="2">Belongs to the sterol desaturase family.</text>
</comment>
<accession>Q1LX59</accession>
<feature type="chain" id="PRO_0000385451" description="Cholesterol 25-hydroxylase-like protein 1, member 2">
    <location>
        <begin position="1"/>
        <end position="276"/>
    </location>
</feature>
<feature type="transmembrane region" description="Helical" evidence="2">
    <location>
        <begin position="39"/>
        <end position="59"/>
    </location>
</feature>
<feature type="transmembrane region" description="Helical" evidence="2">
    <location>
        <begin position="90"/>
        <end position="110"/>
    </location>
</feature>
<feature type="transmembrane region" description="Helical" evidence="2">
    <location>
        <begin position="126"/>
        <end position="146"/>
    </location>
</feature>
<feature type="transmembrane region" description="Helical" evidence="2">
    <location>
        <begin position="175"/>
        <end position="195"/>
    </location>
</feature>
<feature type="transmembrane region" description="Helical" evidence="2">
    <location>
        <begin position="199"/>
        <end position="219"/>
    </location>
</feature>
<feature type="domain" description="Fatty acid hydroxylase" evidence="2">
    <location>
        <begin position="134"/>
        <end position="265"/>
    </location>
</feature>
<feature type="short sequence motif" description="Histidine box-1" evidence="2">
    <location>
        <begin position="144"/>
        <end position="148"/>
    </location>
</feature>
<feature type="short sequence motif" description="Histidine box-2" evidence="2">
    <location>
        <begin position="159"/>
        <end position="163"/>
    </location>
</feature>
<feature type="short sequence motif" description="Histidine box-3" evidence="2">
    <location>
        <begin position="240"/>
        <end position="246"/>
    </location>
</feature>
<feature type="glycosylation site" description="N-linked (GlcNAc...) asparagine" evidence="2">
    <location>
        <position position="30"/>
    </location>
</feature>
<feature type="glycosylation site" description="N-linked (GlcNAc...) asparagine" evidence="2">
    <location>
        <position position="164"/>
    </location>
</feature>
<gene>
    <name evidence="3" type="primary">ch25hl1.2</name>
    <name type="ORF">si:dkey-24l11.9</name>
</gene>
<proteinExistence type="inferred from homology"/>
<protein>
    <recommendedName>
        <fullName evidence="3">Cholesterol 25-hydroxylase-like protein 1, member 2</fullName>
        <ecNumber>1.14.99.-</ecNumber>
    </recommendedName>
</protein>
<organism>
    <name type="scientific">Danio rerio</name>
    <name type="common">Zebrafish</name>
    <name type="synonym">Brachydanio rerio</name>
    <dbReference type="NCBI Taxonomy" id="7955"/>
    <lineage>
        <taxon>Eukaryota</taxon>
        <taxon>Metazoa</taxon>
        <taxon>Chordata</taxon>
        <taxon>Craniata</taxon>
        <taxon>Vertebrata</taxon>
        <taxon>Euteleostomi</taxon>
        <taxon>Actinopterygii</taxon>
        <taxon>Neopterygii</taxon>
        <taxon>Teleostei</taxon>
        <taxon>Ostariophysi</taxon>
        <taxon>Cypriniformes</taxon>
        <taxon>Danionidae</taxon>
        <taxon>Danioninae</taxon>
        <taxon>Danio</taxon>
    </lineage>
</organism>
<evidence type="ECO:0000250" key="1">
    <source>
        <dbReference type="UniProtKB" id="Q9Z0F5"/>
    </source>
</evidence>
<evidence type="ECO:0000255" key="2"/>
<evidence type="ECO:0000312" key="3">
    <source>
        <dbReference type="ZFIN" id="ZDB-GENE-050419-90"/>
    </source>
</evidence>